<protein>
    <recommendedName>
        <fullName evidence="8">Zinc finger protein BRUTUS-like At1g18910</fullName>
    </recommendedName>
</protein>
<feature type="chain" id="PRO_0000437681" description="Zinc finger protein BRUTUS-like At1g18910">
    <location>
        <begin position="1"/>
        <end position="1254"/>
    </location>
</feature>
<feature type="transmembrane region" description="Helical" evidence="2">
    <location>
        <begin position="454"/>
        <end position="474"/>
    </location>
</feature>
<feature type="zinc finger region" description="CHY-type" evidence="4">
    <location>
        <begin position="1013"/>
        <end position="1082"/>
    </location>
</feature>
<feature type="zinc finger region" description="CTCHY-type" evidence="5">
    <location>
        <begin position="1084"/>
        <end position="1147"/>
    </location>
</feature>
<feature type="zinc finger region" description="RING-type; atypical" evidence="3">
    <location>
        <begin position="1148"/>
        <end position="1190"/>
    </location>
</feature>
<feature type="region of interest" description="Disordered" evidence="6">
    <location>
        <begin position="1"/>
        <end position="30"/>
    </location>
</feature>
<feature type="binding site" evidence="4">
    <location>
        <position position="1020"/>
    </location>
    <ligand>
        <name>Zn(2+)</name>
        <dbReference type="ChEBI" id="CHEBI:29105"/>
        <label>1</label>
    </ligand>
</feature>
<feature type="binding site" evidence="4">
    <location>
        <position position="1022"/>
    </location>
    <ligand>
        <name>Zn(2+)</name>
        <dbReference type="ChEBI" id="CHEBI:29105"/>
        <label>1</label>
    </ligand>
</feature>
<feature type="binding site" evidence="4">
    <location>
        <position position="1033"/>
    </location>
    <ligand>
        <name>Zn(2+)</name>
        <dbReference type="ChEBI" id="CHEBI:29105"/>
        <label>2</label>
    </ligand>
</feature>
<feature type="binding site" evidence="4">
    <location>
        <position position="1034"/>
    </location>
    <ligand>
        <name>Zn(2+)</name>
        <dbReference type="ChEBI" id="CHEBI:29105"/>
        <label>2</label>
    </ligand>
</feature>
<feature type="binding site" evidence="4">
    <location>
        <position position="1040"/>
    </location>
    <ligand>
        <name>Zn(2+)</name>
        <dbReference type="ChEBI" id="CHEBI:29105"/>
        <label>1</label>
    </ligand>
</feature>
<feature type="binding site" evidence="4">
    <location>
        <position position="1043"/>
    </location>
    <ligand>
        <name>Zn(2+)</name>
        <dbReference type="ChEBI" id="CHEBI:29105"/>
        <label>1</label>
    </ligand>
</feature>
<feature type="binding site" evidence="4">
    <location>
        <position position="1044"/>
    </location>
    <ligand>
        <name>Zn(2+)</name>
        <dbReference type="ChEBI" id="CHEBI:29105"/>
        <label>2</label>
    </ligand>
</feature>
<feature type="binding site" evidence="4">
    <location>
        <position position="1050"/>
    </location>
    <ligand>
        <name>Zn(2+)</name>
        <dbReference type="ChEBI" id="CHEBI:29105"/>
        <label>2</label>
    </ligand>
</feature>
<feature type="binding site" evidence="4">
    <location>
        <position position="1062"/>
    </location>
    <ligand>
        <name>Zn(2+)</name>
        <dbReference type="ChEBI" id="CHEBI:29105"/>
        <label>3</label>
    </ligand>
</feature>
<feature type="binding site" evidence="4">
    <location>
        <position position="1065"/>
    </location>
    <ligand>
        <name>Zn(2+)</name>
        <dbReference type="ChEBI" id="CHEBI:29105"/>
        <label>3</label>
    </ligand>
</feature>
<feature type="binding site" evidence="4">
    <location>
        <position position="1075"/>
    </location>
    <ligand>
        <name>Zn(2+)</name>
        <dbReference type="ChEBI" id="CHEBI:29105"/>
        <label>3</label>
    </ligand>
</feature>
<feature type="binding site" evidence="4">
    <location>
        <position position="1080"/>
    </location>
    <ligand>
        <name>Zn(2+)</name>
        <dbReference type="ChEBI" id="CHEBI:29105"/>
        <label>3</label>
    </ligand>
</feature>
<feature type="binding site" evidence="5">
    <location>
        <position position="1089"/>
    </location>
    <ligand>
        <name>Zn(2+)</name>
        <dbReference type="ChEBI" id="CHEBI:29105"/>
        <label>4</label>
    </ligand>
</feature>
<feature type="binding site" evidence="5">
    <location>
        <position position="1092"/>
    </location>
    <ligand>
        <name>Zn(2+)</name>
        <dbReference type="ChEBI" id="CHEBI:29105"/>
        <label>4</label>
    </ligand>
</feature>
<feature type="binding site" evidence="5">
    <location>
        <position position="1103"/>
    </location>
    <ligand>
        <name>Zn(2+)</name>
        <dbReference type="ChEBI" id="CHEBI:29105"/>
        <label>4</label>
    </ligand>
</feature>
<feature type="binding site" evidence="5">
    <location>
        <position position="1104"/>
    </location>
    <ligand>
        <name>Zn(2+)</name>
        <dbReference type="ChEBI" id="CHEBI:29105"/>
        <label>5</label>
    </ligand>
</feature>
<feature type="binding site" evidence="5">
    <location>
        <position position="1107"/>
    </location>
    <ligand>
        <name>Zn(2+)</name>
        <dbReference type="ChEBI" id="CHEBI:29105"/>
        <label>5</label>
    </ligand>
</feature>
<feature type="binding site" evidence="5">
    <location>
        <position position="1110"/>
    </location>
    <ligand>
        <name>Zn(2+)</name>
        <dbReference type="ChEBI" id="CHEBI:29105"/>
        <label>4</label>
    </ligand>
</feature>
<feature type="binding site" evidence="5">
    <location>
        <position position="1122"/>
    </location>
    <ligand>
        <name>Zn(2+)</name>
        <dbReference type="ChEBI" id="CHEBI:29105"/>
        <label>5</label>
    </ligand>
</feature>
<feature type="binding site" evidence="5">
    <location>
        <position position="1123"/>
    </location>
    <ligand>
        <name>Zn(2+)</name>
        <dbReference type="ChEBI" id="CHEBI:29105"/>
        <label>6</label>
    </ligand>
</feature>
<feature type="binding site" evidence="5">
    <location>
        <position position="1126"/>
    </location>
    <ligand>
        <name>Zn(2+)</name>
        <dbReference type="ChEBI" id="CHEBI:29105"/>
        <label>6</label>
    </ligand>
</feature>
<feature type="binding site" evidence="5">
    <location>
        <position position="1129"/>
    </location>
    <ligand>
        <name>Zn(2+)</name>
        <dbReference type="ChEBI" id="CHEBI:29105"/>
        <label>5</label>
    </ligand>
</feature>
<feature type="binding site" evidence="5">
    <location>
        <position position="1137"/>
    </location>
    <ligand>
        <name>Zn(2+)</name>
        <dbReference type="ChEBI" id="CHEBI:29105"/>
        <label>6</label>
    </ligand>
</feature>
<feature type="binding site" evidence="5">
    <location>
        <position position="1139"/>
    </location>
    <ligand>
        <name>Zn(2+)</name>
        <dbReference type="ChEBI" id="CHEBI:29105"/>
        <label>6</label>
    </ligand>
</feature>
<feature type="site" description="Required for iron-dependent instability" evidence="1">
    <location>
        <position position="98"/>
    </location>
</feature>
<reference key="1">
    <citation type="journal article" date="2000" name="Nature">
        <title>Sequence and analysis of chromosome 1 of the plant Arabidopsis thaliana.</title>
        <authorList>
            <person name="Theologis A."/>
            <person name="Ecker J.R."/>
            <person name="Palm C.J."/>
            <person name="Federspiel N.A."/>
            <person name="Kaul S."/>
            <person name="White O."/>
            <person name="Alonso J."/>
            <person name="Altafi H."/>
            <person name="Araujo R."/>
            <person name="Bowman C.L."/>
            <person name="Brooks S.Y."/>
            <person name="Buehler E."/>
            <person name="Chan A."/>
            <person name="Chao Q."/>
            <person name="Chen H."/>
            <person name="Cheuk R.F."/>
            <person name="Chin C.W."/>
            <person name="Chung M.K."/>
            <person name="Conn L."/>
            <person name="Conway A.B."/>
            <person name="Conway A.R."/>
            <person name="Creasy T.H."/>
            <person name="Dewar K."/>
            <person name="Dunn P."/>
            <person name="Etgu P."/>
            <person name="Feldblyum T.V."/>
            <person name="Feng J.-D."/>
            <person name="Fong B."/>
            <person name="Fujii C.Y."/>
            <person name="Gill J.E."/>
            <person name="Goldsmith A.D."/>
            <person name="Haas B."/>
            <person name="Hansen N.F."/>
            <person name="Hughes B."/>
            <person name="Huizar L."/>
            <person name="Hunter J.L."/>
            <person name="Jenkins J."/>
            <person name="Johnson-Hopson C."/>
            <person name="Khan S."/>
            <person name="Khaykin E."/>
            <person name="Kim C.J."/>
            <person name="Koo H.L."/>
            <person name="Kremenetskaia I."/>
            <person name="Kurtz D.B."/>
            <person name="Kwan A."/>
            <person name="Lam B."/>
            <person name="Langin-Hooper S."/>
            <person name="Lee A."/>
            <person name="Lee J.M."/>
            <person name="Lenz C.A."/>
            <person name="Li J.H."/>
            <person name="Li Y.-P."/>
            <person name="Lin X."/>
            <person name="Liu S.X."/>
            <person name="Liu Z.A."/>
            <person name="Luros J.S."/>
            <person name="Maiti R."/>
            <person name="Marziali A."/>
            <person name="Militscher J."/>
            <person name="Miranda M."/>
            <person name="Nguyen M."/>
            <person name="Nierman W.C."/>
            <person name="Osborne B.I."/>
            <person name="Pai G."/>
            <person name="Peterson J."/>
            <person name="Pham P.K."/>
            <person name="Rizzo M."/>
            <person name="Rooney T."/>
            <person name="Rowley D."/>
            <person name="Sakano H."/>
            <person name="Salzberg S.L."/>
            <person name="Schwartz J.R."/>
            <person name="Shinn P."/>
            <person name="Southwick A.M."/>
            <person name="Sun H."/>
            <person name="Tallon L.J."/>
            <person name="Tambunga G."/>
            <person name="Toriumi M.J."/>
            <person name="Town C.D."/>
            <person name="Utterback T."/>
            <person name="Van Aken S."/>
            <person name="Vaysberg M."/>
            <person name="Vysotskaia V.S."/>
            <person name="Walker M."/>
            <person name="Wu D."/>
            <person name="Yu G."/>
            <person name="Fraser C.M."/>
            <person name="Venter J.C."/>
            <person name="Davis R.W."/>
        </authorList>
    </citation>
    <scope>NUCLEOTIDE SEQUENCE [LARGE SCALE GENOMIC DNA]</scope>
    <source>
        <strain>cv. Columbia</strain>
    </source>
</reference>
<reference key="2">
    <citation type="journal article" date="2017" name="Plant J.">
        <title>Araport11: a complete reannotation of the Arabidopsis thaliana reference genome.</title>
        <authorList>
            <person name="Cheng C.Y."/>
            <person name="Krishnakumar V."/>
            <person name="Chan A.P."/>
            <person name="Thibaud-Nissen F."/>
            <person name="Schobel S."/>
            <person name="Town C.D."/>
        </authorList>
    </citation>
    <scope>GENOME REANNOTATION</scope>
    <source>
        <strain>cv. Columbia</strain>
    </source>
</reference>
<reference key="3">
    <citation type="submission" date="2004-09" db="EMBL/GenBank/DDBJ databases">
        <title>Large-scale analysis of RIKEN Arabidopsis full-length (RAFL) cDNAs.</title>
        <authorList>
            <person name="Totoki Y."/>
            <person name="Seki M."/>
            <person name="Ishida J."/>
            <person name="Nakajima M."/>
            <person name="Enju A."/>
            <person name="Kamiya A."/>
            <person name="Narusaka M."/>
            <person name="Shin-i T."/>
            <person name="Nakagawa M."/>
            <person name="Sakamoto N."/>
            <person name="Oishi K."/>
            <person name="Kohara Y."/>
            <person name="Kobayashi M."/>
            <person name="Toyoda A."/>
            <person name="Sakaki Y."/>
            <person name="Sakurai T."/>
            <person name="Iida K."/>
            <person name="Akiyama K."/>
            <person name="Satou M."/>
            <person name="Toyoda T."/>
            <person name="Konagaya A."/>
            <person name="Carninci P."/>
            <person name="Kawai J."/>
            <person name="Hayashizaki Y."/>
            <person name="Shinozaki K."/>
        </authorList>
    </citation>
    <scope>NUCLEOTIDE SEQUENCE [LARGE SCALE MRNA] OF 1163-1254</scope>
    <source>
        <strain>cv. Columbia</strain>
    </source>
</reference>
<reference key="4">
    <citation type="journal article" date="2004" name="Plant Cell">
        <title>The essential basic helix-loop-helix protein FIT1 is required for the iron deficiency response.</title>
        <authorList>
            <person name="Colangelo E.P."/>
            <person name="Guerinot M.L."/>
        </authorList>
    </citation>
    <scope>INDUCTION BY IRON DEFICIENCY</scope>
</reference>
<evidence type="ECO:0000250" key="1">
    <source>
        <dbReference type="UniProtKB" id="Q8LPQ5"/>
    </source>
</evidence>
<evidence type="ECO:0000255" key="2"/>
<evidence type="ECO:0000255" key="3">
    <source>
        <dbReference type="PROSITE-ProRule" id="PRU00175"/>
    </source>
</evidence>
<evidence type="ECO:0000255" key="4">
    <source>
        <dbReference type="PROSITE-ProRule" id="PRU00601"/>
    </source>
</evidence>
<evidence type="ECO:0000255" key="5">
    <source>
        <dbReference type="PROSITE-ProRule" id="PRU00965"/>
    </source>
</evidence>
<evidence type="ECO:0000256" key="6">
    <source>
        <dbReference type="SAM" id="MobiDB-lite"/>
    </source>
</evidence>
<evidence type="ECO:0000269" key="7">
    <source>
    </source>
</evidence>
<evidence type="ECO:0000305" key="8"/>
<evidence type="ECO:0000312" key="9">
    <source>
        <dbReference type="Araport" id="AT1G18910"/>
    </source>
</evidence>
<evidence type="ECO:0000312" key="10">
    <source>
        <dbReference type="EMBL" id="AAF79306.1"/>
    </source>
</evidence>
<dbReference type="EMBL" id="AC068602">
    <property type="protein sequence ID" value="AAF79306.1"/>
    <property type="status" value="ALT_SEQ"/>
    <property type="molecule type" value="Genomic_DNA"/>
</dbReference>
<dbReference type="EMBL" id="CP002684">
    <property type="protein sequence ID" value="AEE29781.1"/>
    <property type="molecule type" value="Genomic_DNA"/>
</dbReference>
<dbReference type="EMBL" id="AK176552">
    <property type="protein sequence ID" value="BAD44315.1"/>
    <property type="molecule type" value="mRNA"/>
</dbReference>
<dbReference type="PIR" id="A86323">
    <property type="entry name" value="A86323"/>
</dbReference>
<dbReference type="RefSeq" id="NP_173325.2">
    <property type="nucleotide sequence ID" value="NM_101748.3"/>
</dbReference>
<dbReference type="SASBDB" id="F4IDY5"/>
<dbReference type="SMR" id="F4IDY5"/>
<dbReference type="FunCoup" id="F4IDY5">
    <property type="interactions" value="3"/>
</dbReference>
<dbReference type="STRING" id="3702.F4IDY5"/>
<dbReference type="PaxDb" id="3702-AT1G18910.1"/>
<dbReference type="EnsemblPlants" id="AT1G18910.1">
    <property type="protein sequence ID" value="AT1G18910.1"/>
    <property type="gene ID" value="AT1G18910"/>
</dbReference>
<dbReference type="GeneID" id="838472"/>
<dbReference type="Gramene" id="AT1G18910.1">
    <property type="protein sequence ID" value="AT1G18910.1"/>
    <property type="gene ID" value="AT1G18910"/>
</dbReference>
<dbReference type="KEGG" id="ath:AT1G18910"/>
<dbReference type="Araport" id="AT1G18910"/>
<dbReference type="TAIR" id="AT1G18910">
    <property type="gene designation" value="BTSL2"/>
</dbReference>
<dbReference type="eggNOG" id="KOG1940">
    <property type="taxonomic scope" value="Eukaryota"/>
</dbReference>
<dbReference type="HOGENOM" id="CLU_003967_0_0_1"/>
<dbReference type="InParanoid" id="F4IDY5"/>
<dbReference type="OMA" id="DPLDIVW"/>
<dbReference type="UniPathway" id="UPA00143"/>
<dbReference type="PRO" id="PR:F4IDY5"/>
<dbReference type="Proteomes" id="UP000006548">
    <property type="component" value="Chromosome 1"/>
</dbReference>
<dbReference type="ExpressionAtlas" id="F4IDY5">
    <property type="expression patterns" value="baseline and differential"/>
</dbReference>
<dbReference type="GO" id="GO:0016020">
    <property type="term" value="C:membrane"/>
    <property type="evidence" value="ECO:0007669"/>
    <property type="project" value="UniProtKB-SubCell"/>
</dbReference>
<dbReference type="GO" id="GO:0005634">
    <property type="term" value="C:nucleus"/>
    <property type="evidence" value="ECO:0007669"/>
    <property type="project" value="UniProtKB-SubCell"/>
</dbReference>
<dbReference type="GO" id="GO:0016874">
    <property type="term" value="F:ligase activity"/>
    <property type="evidence" value="ECO:0007669"/>
    <property type="project" value="UniProtKB-KW"/>
</dbReference>
<dbReference type="GO" id="GO:0061630">
    <property type="term" value="F:ubiquitin protein ligase activity"/>
    <property type="evidence" value="ECO:0000314"/>
    <property type="project" value="TAIR"/>
</dbReference>
<dbReference type="GO" id="GO:0008270">
    <property type="term" value="F:zinc ion binding"/>
    <property type="evidence" value="ECO:0007669"/>
    <property type="project" value="UniProtKB-KW"/>
</dbReference>
<dbReference type="GO" id="GO:0010106">
    <property type="term" value="P:cellular response to iron ion starvation"/>
    <property type="evidence" value="ECO:0000270"/>
    <property type="project" value="UniProtKB"/>
</dbReference>
<dbReference type="GO" id="GO:0006879">
    <property type="term" value="P:intracellular iron ion homeostasis"/>
    <property type="evidence" value="ECO:0000316"/>
    <property type="project" value="TAIR"/>
</dbReference>
<dbReference type="GO" id="GO:0033212">
    <property type="term" value="P:iron import into cell"/>
    <property type="evidence" value="ECO:0000315"/>
    <property type="project" value="TAIR"/>
</dbReference>
<dbReference type="GO" id="GO:0098711">
    <property type="term" value="P:iron ion import across plasma membrane"/>
    <property type="evidence" value="ECO:0000315"/>
    <property type="project" value="TAIR"/>
</dbReference>
<dbReference type="GO" id="GO:0016567">
    <property type="term" value="P:protein ubiquitination"/>
    <property type="evidence" value="ECO:0007669"/>
    <property type="project" value="UniProtKB-UniPathway"/>
</dbReference>
<dbReference type="GO" id="GO:0034756">
    <property type="term" value="P:regulation of iron ion transport"/>
    <property type="evidence" value="ECO:0000315"/>
    <property type="project" value="TAIR"/>
</dbReference>
<dbReference type="GO" id="GO:0010039">
    <property type="term" value="P:response to iron ion"/>
    <property type="evidence" value="ECO:0000316"/>
    <property type="project" value="TAIR"/>
</dbReference>
<dbReference type="GO" id="GO:0006511">
    <property type="term" value="P:ubiquitin-dependent protein catabolic process"/>
    <property type="evidence" value="ECO:0000314"/>
    <property type="project" value="TAIR"/>
</dbReference>
<dbReference type="CDD" id="cd12108">
    <property type="entry name" value="Hr-like"/>
    <property type="match status" value="2"/>
</dbReference>
<dbReference type="CDD" id="cd16464">
    <property type="entry name" value="RING-H2_Pirh2-like"/>
    <property type="match status" value="1"/>
</dbReference>
<dbReference type="FunFam" id="1.20.120.520:FF:000009">
    <property type="entry name" value="Zinc finger protein BRUTUS"/>
    <property type="match status" value="1"/>
</dbReference>
<dbReference type="FunFam" id="3.30.40.10:FF:000208">
    <property type="entry name" value="Zinc finger protein-related isoform 1"/>
    <property type="match status" value="1"/>
</dbReference>
<dbReference type="Gene3D" id="2.20.28.10">
    <property type="match status" value="1"/>
</dbReference>
<dbReference type="Gene3D" id="1.20.120.520">
    <property type="entry name" value="nmb1532 protein domain like"/>
    <property type="match status" value="3"/>
</dbReference>
<dbReference type="Gene3D" id="3.30.40.10">
    <property type="entry name" value="Zinc/RING finger domain, C3HC4 (zinc finger)"/>
    <property type="match status" value="1"/>
</dbReference>
<dbReference type="InterPro" id="IPR012312">
    <property type="entry name" value="Hemerythrin-like"/>
</dbReference>
<dbReference type="InterPro" id="IPR039512">
    <property type="entry name" value="RCHY1_zinc-ribbon"/>
</dbReference>
<dbReference type="InterPro" id="IPR008913">
    <property type="entry name" value="Znf_CHY"/>
</dbReference>
<dbReference type="InterPro" id="IPR037274">
    <property type="entry name" value="Znf_CHY_sf"/>
</dbReference>
<dbReference type="InterPro" id="IPR017921">
    <property type="entry name" value="Znf_CTCHY"/>
</dbReference>
<dbReference type="InterPro" id="IPR037275">
    <property type="entry name" value="Znf_CTCHY_sf"/>
</dbReference>
<dbReference type="InterPro" id="IPR001841">
    <property type="entry name" value="Znf_RING"/>
</dbReference>
<dbReference type="InterPro" id="IPR013083">
    <property type="entry name" value="Znf_RING/FYVE/PHD"/>
</dbReference>
<dbReference type="PANTHER" id="PTHR21319:SF47">
    <property type="entry name" value="CHY-TYPE DOMAIN-CONTAINING PROTEIN"/>
    <property type="match status" value="1"/>
</dbReference>
<dbReference type="PANTHER" id="PTHR21319">
    <property type="entry name" value="RING FINGER AND CHY ZINC FINGER DOMAIN-CONTAINING PROTEIN 1"/>
    <property type="match status" value="1"/>
</dbReference>
<dbReference type="Pfam" id="PF01814">
    <property type="entry name" value="Hemerythrin"/>
    <property type="match status" value="1"/>
</dbReference>
<dbReference type="Pfam" id="PF05495">
    <property type="entry name" value="zf-CHY"/>
    <property type="match status" value="1"/>
</dbReference>
<dbReference type="Pfam" id="PF13639">
    <property type="entry name" value="zf-RING_2"/>
    <property type="match status" value="1"/>
</dbReference>
<dbReference type="Pfam" id="PF14599">
    <property type="entry name" value="zinc_ribbon_6"/>
    <property type="match status" value="1"/>
</dbReference>
<dbReference type="SMART" id="SM00184">
    <property type="entry name" value="RING"/>
    <property type="match status" value="2"/>
</dbReference>
<dbReference type="SUPFAM" id="SSF161219">
    <property type="entry name" value="CHY zinc finger-like"/>
    <property type="match status" value="1"/>
</dbReference>
<dbReference type="SUPFAM" id="SSF57850">
    <property type="entry name" value="RING/U-box"/>
    <property type="match status" value="1"/>
</dbReference>
<dbReference type="SUPFAM" id="SSF161245">
    <property type="entry name" value="Zinc hairpin stack"/>
    <property type="match status" value="1"/>
</dbReference>
<dbReference type="PROSITE" id="PS51266">
    <property type="entry name" value="ZF_CHY"/>
    <property type="match status" value="1"/>
</dbReference>
<dbReference type="PROSITE" id="PS51270">
    <property type="entry name" value="ZF_CTCHY"/>
    <property type="match status" value="1"/>
</dbReference>
<dbReference type="PROSITE" id="PS50089">
    <property type="entry name" value="ZF_RING_2"/>
    <property type="match status" value="1"/>
</dbReference>
<organism>
    <name type="scientific">Arabidopsis thaliana</name>
    <name type="common">Mouse-ear cress</name>
    <dbReference type="NCBI Taxonomy" id="3702"/>
    <lineage>
        <taxon>Eukaryota</taxon>
        <taxon>Viridiplantae</taxon>
        <taxon>Streptophyta</taxon>
        <taxon>Embryophyta</taxon>
        <taxon>Tracheophyta</taxon>
        <taxon>Spermatophyta</taxon>
        <taxon>Magnoliopsida</taxon>
        <taxon>eudicotyledons</taxon>
        <taxon>Gunneridae</taxon>
        <taxon>Pentapetalae</taxon>
        <taxon>rosids</taxon>
        <taxon>malvids</taxon>
        <taxon>Brassicales</taxon>
        <taxon>Brassicaceae</taxon>
        <taxon>Camelineae</taxon>
        <taxon>Arabidopsis</taxon>
    </lineage>
</organism>
<comment type="function">
    <text evidence="1">Probable E3 ubiquitin-protein ligase that may regulate the response to iron deficiency and thus contributes to iron homeostasis.</text>
</comment>
<comment type="pathway">
    <text evidence="8">Protein modification; protein ubiquitination.</text>
</comment>
<comment type="subunit">
    <text evidence="1">Binds zinc and iron ions.</text>
</comment>
<comment type="subcellular location">
    <subcellularLocation>
        <location evidence="2">Membrane</location>
        <topology evidence="2">Single-pass membrane protein</topology>
    </subcellularLocation>
    <subcellularLocation>
        <location evidence="1">Nucleus</location>
    </subcellularLocation>
</comment>
<comment type="induction">
    <text evidence="7">Induced by iron deficiency.</text>
</comment>
<comment type="sequence caution" evidence="8">
    <conflict type="erroneous gene model prediction">
        <sequence resource="EMBL-CDS" id="AAF79306"/>
    </conflict>
</comment>
<gene>
    <name evidence="9" type="ordered locus">At1g18910</name>
    <name evidence="10" type="ORF">F14D16.3</name>
</gene>
<proteinExistence type="evidence at transcript level"/>
<name>BTSL1_ARATH</name>
<sequence>MGVGDPLPLPPEKNRREVNKPPDIASTSSSSASAVNNARLSDAPILLFVYFHKAFRAQLAELQFLAGDTVRSGSDLAVELRSKFEFLKLVYKYHSAAEDEVIFSALDTRVKNIVFNYSLEHDATDDLFTSVFHWLNVLEEEQGNRADVLREVVLCIGTIQSSICQHMLKEERQVFPLMIENFSFEEQASLVWQFICSVPVMVLEEIFPWMTSLLSPKEKSEVETCFKEVVPNELSLQLVINSWLIDDSQSSLTALTKIMKGVQSVEVSENMTNSQTNSSSSGVFQRFWQWSKKMSFSSPNTGHILVHGIHLWHNAIRKDLVDIQKGLCQLTFPSLSLDLNVLVVRLNFLADVLIFYSNAFKTFFYPVFEDMVDQQHSSSSKQFTIDGHVENFKKSLDLETRAGSDNFVITLQEKLESLILTVAKQFSIEETEVFPIISKNCNIEMQRQLLYRSIHFLPLGLLKCVIMWFSAQLPEDECQSIIHYLSSEDSFPNKPFAHLLLQWFRFGYSGKTPVESFWNELSFMFKPRCSFEEELTEEASGSFFQQSPQKLFKVSDPYSMDPPAGYMNETPYSSAMNQQILIPGKLRPLLHLPDLFGDKTIGEHLTMDLKPIDLIFYFHKAMKKDLDYLVRGSARLATDYSFLGEFQQRFHLIKFLYQIHSDAEDEIAFPALEAKGKLQNISQSYSIDHELEVEHLNKVSFLLNELAELNMLVLDHKNVKYEKLCMSLQDICKSIHKLLSEHLHREETELWCLFRDCFTIEEQEKIIACMLGRISGEILQDMIPWLMESLIPDEQHAVMSLWRQATRKTMFGEWLTEWYNSHAVEEETEEANKDPSENSDPLDVVWSYLFEGAADEYKGSICSKPLEETELKGIMNKPLGKAAPNNKVEFGNKEENHLEISGSKKVCTGADETKYKEQTDSNAQAFQMSHNTSQSGQDSRYECLLSMSQEDVEATIRRISRDSSLDPQKKSYIIQNLLMSRWIATQRIYNLEPSILSSNREAVPGQNPSYRDPHKLIFGCKHYKRSCKLLAPCCNKLYTCIRCHDEEVDHLLDRKQITKMMCMKCMIIQPVGASCSNISCSSSMGKYYCKICKLFDDDREIYHCPYCNLCRLGKGLSIDYFHCMKCNACMSRLIVEHVCREKCLEDNCPICHEYIFTSNSPVKALPCGHVMHSTCFQEYTCSHYTCPICSKSLGDMQVYFRMLDALLAEQKMPDEYLNQTQVILCNDCGRKGNAPYHWLYHKCSSCASYNTRLF</sequence>
<accession>F4IDY5</accession>
<accession>Q67YB6</accession>
<accession>Q9LMD9</accession>
<keyword id="KW-0408">Iron</keyword>
<keyword id="KW-0436">Ligase</keyword>
<keyword id="KW-0472">Membrane</keyword>
<keyword id="KW-0479">Metal-binding</keyword>
<keyword id="KW-0539">Nucleus</keyword>
<keyword id="KW-1185">Reference proteome</keyword>
<keyword id="KW-0812">Transmembrane</keyword>
<keyword id="KW-1133">Transmembrane helix</keyword>
<keyword id="KW-0833">Ubl conjugation pathway</keyword>
<keyword id="KW-0862">Zinc</keyword>
<keyword id="KW-0863">Zinc-finger</keyword>